<proteinExistence type="evidence at protein level"/>
<reference key="1">
    <citation type="journal article" date="2005" name="Science">
        <title>The transcriptional landscape of the mammalian genome.</title>
        <authorList>
            <person name="Carninci P."/>
            <person name="Kasukawa T."/>
            <person name="Katayama S."/>
            <person name="Gough J."/>
            <person name="Frith M.C."/>
            <person name="Maeda N."/>
            <person name="Oyama R."/>
            <person name="Ravasi T."/>
            <person name="Lenhard B."/>
            <person name="Wells C."/>
            <person name="Kodzius R."/>
            <person name="Shimokawa K."/>
            <person name="Bajic V.B."/>
            <person name="Brenner S.E."/>
            <person name="Batalov S."/>
            <person name="Forrest A.R."/>
            <person name="Zavolan M."/>
            <person name="Davis M.J."/>
            <person name="Wilming L.G."/>
            <person name="Aidinis V."/>
            <person name="Allen J.E."/>
            <person name="Ambesi-Impiombato A."/>
            <person name="Apweiler R."/>
            <person name="Aturaliya R.N."/>
            <person name="Bailey T.L."/>
            <person name="Bansal M."/>
            <person name="Baxter L."/>
            <person name="Beisel K.W."/>
            <person name="Bersano T."/>
            <person name="Bono H."/>
            <person name="Chalk A.M."/>
            <person name="Chiu K.P."/>
            <person name="Choudhary V."/>
            <person name="Christoffels A."/>
            <person name="Clutterbuck D.R."/>
            <person name="Crowe M.L."/>
            <person name="Dalla E."/>
            <person name="Dalrymple B.P."/>
            <person name="de Bono B."/>
            <person name="Della Gatta G."/>
            <person name="di Bernardo D."/>
            <person name="Down T."/>
            <person name="Engstrom P."/>
            <person name="Fagiolini M."/>
            <person name="Faulkner G."/>
            <person name="Fletcher C.F."/>
            <person name="Fukushima T."/>
            <person name="Furuno M."/>
            <person name="Futaki S."/>
            <person name="Gariboldi M."/>
            <person name="Georgii-Hemming P."/>
            <person name="Gingeras T.R."/>
            <person name="Gojobori T."/>
            <person name="Green R.E."/>
            <person name="Gustincich S."/>
            <person name="Harbers M."/>
            <person name="Hayashi Y."/>
            <person name="Hensch T.K."/>
            <person name="Hirokawa N."/>
            <person name="Hill D."/>
            <person name="Huminiecki L."/>
            <person name="Iacono M."/>
            <person name="Ikeo K."/>
            <person name="Iwama A."/>
            <person name="Ishikawa T."/>
            <person name="Jakt M."/>
            <person name="Kanapin A."/>
            <person name="Katoh M."/>
            <person name="Kawasawa Y."/>
            <person name="Kelso J."/>
            <person name="Kitamura H."/>
            <person name="Kitano H."/>
            <person name="Kollias G."/>
            <person name="Krishnan S.P."/>
            <person name="Kruger A."/>
            <person name="Kummerfeld S.K."/>
            <person name="Kurochkin I.V."/>
            <person name="Lareau L.F."/>
            <person name="Lazarevic D."/>
            <person name="Lipovich L."/>
            <person name="Liu J."/>
            <person name="Liuni S."/>
            <person name="McWilliam S."/>
            <person name="Madan Babu M."/>
            <person name="Madera M."/>
            <person name="Marchionni L."/>
            <person name="Matsuda H."/>
            <person name="Matsuzawa S."/>
            <person name="Miki H."/>
            <person name="Mignone F."/>
            <person name="Miyake S."/>
            <person name="Morris K."/>
            <person name="Mottagui-Tabar S."/>
            <person name="Mulder N."/>
            <person name="Nakano N."/>
            <person name="Nakauchi H."/>
            <person name="Ng P."/>
            <person name="Nilsson R."/>
            <person name="Nishiguchi S."/>
            <person name="Nishikawa S."/>
            <person name="Nori F."/>
            <person name="Ohara O."/>
            <person name="Okazaki Y."/>
            <person name="Orlando V."/>
            <person name="Pang K.C."/>
            <person name="Pavan W.J."/>
            <person name="Pavesi G."/>
            <person name="Pesole G."/>
            <person name="Petrovsky N."/>
            <person name="Piazza S."/>
            <person name="Reed J."/>
            <person name="Reid J.F."/>
            <person name="Ring B.Z."/>
            <person name="Ringwald M."/>
            <person name="Rost B."/>
            <person name="Ruan Y."/>
            <person name="Salzberg S.L."/>
            <person name="Sandelin A."/>
            <person name="Schneider C."/>
            <person name="Schoenbach C."/>
            <person name="Sekiguchi K."/>
            <person name="Semple C.A."/>
            <person name="Seno S."/>
            <person name="Sessa L."/>
            <person name="Sheng Y."/>
            <person name="Shibata Y."/>
            <person name="Shimada H."/>
            <person name="Shimada K."/>
            <person name="Silva D."/>
            <person name="Sinclair B."/>
            <person name="Sperling S."/>
            <person name="Stupka E."/>
            <person name="Sugiura K."/>
            <person name="Sultana R."/>
            <person name="Takenaka Y."/>
            <person name="Taki K."/>
            <person name="Tammoja K."/>
            <person name="Tan S.L."/>
            <person name="Tang S."/>
            <person name="Taylor M.S."/>
            <person name="Tegner J."/>
            <person name="Teichmann S.A."/>
            <person name="Ueda H.R."/>
            <person name="van Nimwegen E."/>
            <person name="Verardo R."/>
            <person name="Wei C.L."/>
            <person name="Yagi K."/>
            <person name="Yamanishi H."/>
            <person name="Zabarovsky E."/>
            <person name="Zhu S."/>
            <person name="Zimmer A."/>
            <person name="Hide W."/>
            <person name="Bult C."/>
            <person name="Grimmond S.M."/>
            <person name="Teasdale R.D."/>
            <person name="Liu E.T."/>
            <person name="Brusic V."/>
            <person name="Quackenbush J."/>
            <person name="Wahlestedt C."/>
            <person name="Mattick J.S."/>
            <person name="Hume D.A."/>
            <person name="Kai C."/>
            <person name="Sasaki D."/>
            <person name="Tomaru Y."/>
            <person name="Fukuda S."/>
            <person name="Kanamori-Katayama M."/>
            <person name="Suzuki M."/>
            <person name="Aoki J."/>
            <person name="Arakawa T."/>
            <person name="Iida J."/>
            <person name="Imamura K."/>
            <person name="Itoh M."/>
            <person name="Kato T."/>
            <person name="Kawaji H."/>
            <person name="Kawagashira N."/>
            <person name="Kawashima T."/>
            <person name="Kojima M."/>
            <person name="Kondo S."/>
            <person name="Konno H."/>
            <person name="Nakano K."/>
            <person name="Ninomiya N."/>
            <person name="Nishio T."/>
            <person name="Okada M."/>
            <person name="Plessy C."/>
            <person name="Shibata K."/>
            <person name="Shiraki T."/>
            <person name="Suzuki S."/>
            <person name="Tagami M."/>
            <person name="Waki K."/>
            <person name="Watahiki A."/>
            <person name="Okamura-Oho Y."/>
            <person name="Suzuki H."/>
            <person name="Kawai J."/>
            <person name="Hayashizaki Y."/>
        </authorList>
    </citation>
    <scope>NUCLEOTIDE SEQUENCE [LARGE SCALE MRNA] (ISOFORMS 1 AND 2)</scope>
    <source>
        <strain>C57BL/6J</strain>
        <tissue>Embryo</tissue>
        <tissue>Embryonic heart</tissue>
    </source>
</reference>
<reference key="2">
    <citation type="journal article" date="2004" name="Genome Res.">
        <title>The status, quality, and expansion of the NIH full-length cDNA project: the Mammalian Gene Collection (MGC).</title>
        <authorList>
            <consortium name="The MGC Project Team"/>
        </authorList>
    </citation>
    <scope>NUCLEOTIDE SEQUENCE [LARGE SCALE MRNA] (ISOFORMS 1 AND 3)</scope>
    <source>
        <strain>C57BL/6J</strain>
        <strain>Czech II</strain>
        <tissue>Embryonic germ cell</tissue>
        <tissue>Mammary gland</tissue>
    </source>
</reference>
<reference key="3">
    <citation type="journal article" date="2008" name="Immunity">
        <title>Memory T cell RNA rearrangement programmed by heterogeneous nuclear ribonucleoprotein hnRNPLL.</title>
        <authorList>
            <person name="Wu Z."/>
            <person name="Jia X."/>
            <person name="de la Cruz L."/>
            <person name="Su X.-C."/>
            <person name="Marzolf B."/>
            <person name="Troisch P."/>
            <person name="Zak D."/>
            <person name="Hamilton A."/>
            <person name="Whittle B."/>
            <person name="Yu D."/>
            <person name="Sheahan D."/>
            <person name="Bertram E."/>
            <person name="Aderem A."/>
            <person name="Otting G."/>
            <person name="Goodnow C.C."/>
            <person name="Hoyne G.F."/>
        </authorList>
    </citation>
    <scope>FUNCTION</scope>
    <scope>MUTAGENESIS OF VAL-136</scope>
    <scope>INDUCTION</scope>
    <scope>STRUCTURE BY NMR OF RRM 1</scope>
</reference>
<reference key="4">
    <citation type="journal article" date="2010" name="Cell">
        <title>A tissue-specific atlas of mouse protein phosphorylation and expression.</title>
        <authorList>
            <person name="Huttlin E.L."/>
            <person name="Jedrychowski M.P."/>
            <person name="Elias J.E."/>
            <person name="Goswami T."/>
            <person name="Rad R."/>
            <person name="Beausoleil S.A."/>
            <person name="Villen J."/>
            <person name="Haas W."/>
            <person name="Sowa M.E."/>
            <person name="Gygi S.P."/>
        </authorList>
    </citation>
    <scope>PHOSPHORYLATION [LARGE SCALE ANALYSIS] AT SER-37</scope>
    <scope>IDENTIFICATION BY MASS SPECTROMETRY [LARGE SCALE ANALYSIS]</scope>
    <source>
        <tissue>Brain</tissue>
        <tissue>Brown adipose tissue</tissue>
        <tissue>Heart</tissue>
        <tissue>Kidney</tissue>
        <tissue>Liver</tissue>
        <tissue>Lung</tissue>
        <tissue>Pancreas</tissue>
        <tissue>Spleen</tissue>
        <tissue>Testis</tissue>
    </source>
</reference>
<reference key="5">
    <citation type="submission" date="2009-02" db="PDB data bank">
        <title>Solution structure of RNA binding domains in heterogeneous nuclear ribonucleoprotein L-like.</title>
        <authorList>
            <consortium name="RIKEN structural genomics initiative (RSGI)"/>
        </authorList>
    </citation>
    <scope>STRUCTURE BY NMR OF 119-316</scope>
</reference>
<keyword id="KW-0002">3D-structure</keyword>
<keyword id="KW-0025">Alternative splicing</keyword>
<keyword id="KW-1017">Isopeptide bond</keyword>
<keyword id="KW-0597">Phosphoprotein</keyword>
<keyword id="KW-1185">Reference proteome</keyword>
<keyword id="KW-0677">Repeat</keyword>
<keyword id="KW-0687">Ribonucleoprotein</keyword>
<keyword id="KW-0694">RNA-binding</keyword>
<keyword id="KW-0832">Ubl conjugation</keyword>
<evidence type="ECO:0000250" key="1"/>
<evidence type="ECO:0000250" key="2">
    <source>
        <dbReference type="UniProtKB" id="Q8WVV9"/>
    </source>
</evidence>
<evidence type="ECO:0000255" key="3">
    <source>
        <dbReference type="PROSITE-ProRule" id="PRU00176"/>
    </source>
</evidence>
<evidence type="ECO:0000256" key="4">
    <source>
        <dbReference type="SAM" id="MobiDB-lite"/>
    </source>
</evidence>
<evidence type="ECO:0000269" key="5">
    <source>
    </source>
</evidence>
<evidence type="ECO:0000303" key="6">
    <source>
    </source>
</evidence>
<evidence type="ECO:0000303" key="7">
    <source>
    </source>
</evidence>
<evidence type="ECO:0000305" key="8"/>
<evidence type="ECO:0007744" key="9">
    <source>
    </source>
</evidence>
<evidence type="ECO:0007829" key="10">
    <source>
        <dbReference type="PDB" id="1WEX"/>
    </source>
</evidence>
<evidence type="ECO:0007829" key="11">
    <source>
        <dbReference type="PDB" id="2E5I"/>
    </source>
</evidence>
<sequence length="591" mass="64125">MSSSSSSSPKEETYEEDREFESQAKRLKTEEGEIVYSAEESENRQEATPQAGSDSDSGGGDGGDGDGGSGGGGDGEEGEGGEEGDEGDGDEGGSGGDEGGSGGGPRSMPLSTEGGGSHHKVSVSPVVHVRGLCESVVEADLVEALEKFGTICYVMMMPFKRQALVEFENIDSAKECVTFAADVPVYIAGQQAFFNYSTSKRITRPGNTDDPSGGNKVLLLSIQNPLYPITVDVLYTVCNPVGKVQRIVIFKRNGIQAMVEFESVLCAQKAKAALNGADIYAGCCTLKIEYARPTRLNVIRNDNDSWDYTKPYLGRRDRGKGRQRQAILGDHPSSFRHDGYGSHGPLLPLPSRYRMGSRDTPELVAYPLPQASSSYMHGGSPSGSVVMVSGLHQLKMNCSRVFNLFCLYGNIEKVKFMKTIPGTALVEMGDEYAVERAVTHLNNVKLFGKRLNVCVSKQHSVVPSQIFELEDGTSSYKDFAMSKNNRFTSAGQASKNIIQPPSCVLHYYNVPLCVTEETFTKLCNDHEVLPFIKYKVFDAKASAKTLSGLLEWKCKTDAVEALTALNHYQIRVPNGSNPYTLKLCFSTSSHL</sequence>
<name>HNRLL_MOUSE</name>
<feature type="chain" id="PRO_0000081610" description="Heterogeneous nuclear ribonucleoprotein L-like">
    <location>
        <begin position="1"/>
        <end position="591"/>
    </location>
</feature>
<feature type="domain" description="RRM 1" evidence="3">
    <location>
        <begin position="125"/>
        <end position="199"/>
    </location>
</feature>
<feature type="domain" description="RRM 2" evidence="3">
    <location>
        <begin position="215"/>
        <end position="293"/>
    </location>
</feature>
<feature type="domain" description="RRM 3" evidence="3">
    <location>
        <begin position="384"/>
        <end position="458"/>
    </location>
</feature>
<feature type="region of interest" description="Disordered" evidence="4">
    <location>
        <begin position="1"/>
        <end position="120"/>
    </location>
</feature>
<feature type="compositionally biased region" description="Basic and acidic residues" evidence="4">
    <location>
        <begin position="20"/>
        <end position="31"/>
    </location>
</feature>
<feature type="compositionally biased region" description="Gly residues" evidence="4">
    <location>
        <begin position="57"/>
        <end position="73"/>
    </location>
</feature>
<feature type="compositionally biased region" description="Acidic residues" evidence="4">
    <location>
        <begin position="74"/>
        <end position="91"/>
    </location>
</feature>
<feature type="compositionally biased region" description="Gly residues" evidence="4">
    <location>
        <begin position="92"/>
        <end position="105"/>
    </location>
</feature>
<feature type="modified residue" description="Phosphoserine" evidence="9">
    <location>
        <position position="37"/>
    </location>
</feature>
<feature type="modified residue" description="Phosphothreonine" evidence="2">
    <location>
        <position position="48"/>
    </location>
</feature>
<feature type="modified residue" description="Phosphoserine" evidence="2">
    <location>
        <position position="107"/>
    </location>
</feature>
<feature type="modified residue" description="Phosphoserine" evidence="2">
    <location>
        <position position="117"/>
    </location>
</feature>
<feature type="modified residue" description="Phosphoserine" evidence="2">
    <location>
        <position position="124"/>
    </location>
</feature>
<feature type="cross-link" description="Glycyl lysine isopeptide (Lys-Gly) (interchain with G-Cter in SUMO2)" evidence="2">
    <location>
        <position position="28"/>
    </location>
</feature>
<feature type="cross-link" description="Glycyl lysine isopeptide (Lys-Gly) (interchain with G-Cter in SUMO2)" evidence="2">
    <location>
        <position position="540"/>
    </location>
</feature>
<feature type="splice variant" id="VSP_026132" description="In isoform 3." evidence="6">
    <location>
        <begin position="1"/>
        <end position="480"/>
    </location>
</feature>
<feature type="splice variant" id="VSP_013290" description="In isoform 2." evidence="7">
    <original>DRGKGRQRQA</original>
    <variation>GRYFTNFRMY</variation>
    <location>
        <begin position="317"/>
        <end position="326"/>
    </location>
</feature>
<feature type="splice variant" id="VSP_013291" description="In isoform 2." evidence="7">
    <location>
        <begin position="327"/>
        <end position="591"/>
    </location>
</feature>
<feature type="splice variant" id="VSP_026133" description="In isoform 3." evidence="6">
    <original>LCNDHEVLPFIKYKVFDAKASAKTLSGLLEWKCKTDAVEALTALNHYQIRVPNGSNPYTLKLCFSTSSHL</original>
    <variation>VGTEESSVRMLRFVFYVYVVFHSSASFENFSKILLFVVSLVWVCVRRAYRLVVLDGFLC</variation>
    <location>
        <begin position="522"/>
        <end position="591"/>
    </location>
</feature>
<feature type="mutagenesis site" description="Alters RRM 1 stability. Abolishes regulation of alternative splicing." evidence="5">
    <original>V</original>
    <variation>D</variation>
    <location>
        <position position="136"/>
    </location>
</feature>
<feature type="sequence conflict" description="In Ref. 2; AAH12849." evidence="8" ref="2">
    <original>S</original>
    <variation>T</variation>
    <location>
        <position position="4"/>
    </location>
</feature>
<feature type="sequence conflict" description="In Ref. 2; AAH12849." evidence="8" ref="2">
    <original>S</original>
    <variation>SGGG</variation>
    <location>
        <position position="101"/>
    </location>
</feature>
<feature type="strand" evidence="10">
    <location>
        <begin position="125"/>
        <end position="131"/>
    </location>
</feature>
<feature type="helix" evidence="10">
    <location>
        <begin position="138"/>
        <end position="145"/>
    </location>
</feature>
<feature type="turn" evidence="10">
    <location>
        <begin position="146"/>
        <end position="148"/>
    </location>
</feature>
<feature type="strand" evidence="10">
    <location>
        <begin position="151"/>
        <end position="157"/>
    </location>
</feature>
<feature type="turn" evidence="10">
    <location>
        <begin position="158"/>
        <end position="161"/>
    </location>
</feature>
<feature type="strand" evidence="10">
    <location>
        <begin position="162"/>
        <end position="169"/>
    </location>
</feature>
<feature type="helix" evidence="10">
    <location>
        <begin position="170"/>
        <end position="182"/>
    </location>
</feature>
<feature type="strand" evidence="10">
    <location>
        <begin position="186"/>
        <end position="191"/>
    </location>
</feature>
<feature type="strand" evidence="10">
    <location>
        <begin position="193"/>
        <end position="196"/>
    </location>
</feature>
<feature type="strand" evidence="10">
    <location>
        <begin position="198"/>
        <end position="201"/>
    </location>
</feature>
<feature type="strand" evidence="11">
    <location>
        <begin position="216"/>
        <end position="224"/>
    </location>
</feature>
<feature type="helix" evidence="11">
    <location>
        <begin position="231"/>
        <end position="238"/>
    </location>
</feature>
<feature type="turn" evidence="11">
    <location>
        <begin position="239"/>
        <end position="241"/>
    </location>
</feature>
<feature type="strand" evidence="11">
    <location>
        <begin position="244"/>
        <end position="263"/>
    </location>
</feature>
<feature type="helix" evidence="11">
    <location>
        <begin position="264"/>
        <end position="274"/>
    </location>
</feature>
<feature type="strand" evidence="11">
    <location>
        <begin position="283"/>
        <end position="289"/>
    </location>
</feature>
<feature type="strand" evidence="11">
    <location>
        <begin position="302"/>
        <end position="309"/>
    </location>
</feature>
<organism>
    <name type="scientific">Mus musculus</name>
    <name type="common">Mouse</name>
    <dbReference type="NCBI Taxonomy" id="10090"/>
    <lineage>
        <taxon>Eukaryota</taxon>
        <taxon>Metazoa</taxon>
        <taxon>Chordata</taxon>
        <taxon>Craniata</taxon>
        <taxon>Vertebrata</taxon>
        <taxon>Euteleostomi</taxon>
        <taxon>Mammalia</taxon>
        <taxon>Eutheria</taxon>
        <taxon>Euarchontoglires</taxon>
        <taxon>Glires</taxon>
        <taxon>Rodentia</taxon>
        <taxon>Myomorpha</taxon>
        <taxon>Muroidea</taxon>
        <taxon>Muridae</taxon>
        <taxon>Murinae</taxon>
        <taxon>Mus</taxon>
        <taxon>Mus</taxon>
    </lineage>
</organism>
<dbReference type="EMBL" id="AK034860">
    <property type="protein sequence ID" value="BAC28858.1"/>
    <property type="molecule type" value="mRNA"/>
</dbReference>
<dbReference type="EMBL" id="AK146879">
    <property type="protein sequence ID" value="BAE27500.1"/>
    <property type="status" value="ALT_INIT"/>
    <property type="molecule type" value="mRNA"/>
</dbReference>
<dbReference type="EMBL" id="BC004763">
    <property type="protein sequence ID" value="AAH04763.1"/>
    <property type="molecule type" value="mRNA"/>
</dbReference>
<dbReference type="EMBL" id="BC012849">
    <property type="protein sequence ID" value="AAH12849.2"/>
    <property type="molecule type" value="mRNA"/>
</dbReference>
<dbReference type="EMBL" id="BC071184">
    <property type="protein sequence ID" value="AAH71184.1"/>
    <property type="molecule type" value="mRNA"/>
</dbReference>
<dbReference type="CCDS" id="CCDS70845.1">
    <molecule id="Q921F4-1"/>
</dbReference>
<dbReference type="RefSeq" id="NP_659051.3">
    <molecule id="Q921F4-1"/>
    <property type="nucleotide sequence ID" value="NM_144802.4"/>
</dbReference>
<dbReference type="PDB" id="1WEX">
    <property type="method" value="NMR"/>
    <property type="chains" value="A=117-207"/>
</dbReference>
<dbReference type="PDB" id="2E5I">
    <property type="method" value="NMR"/>
    <property type="chains" value="A=200-316"/>
</dbReference>
<dbReference type="PDBsum" id="1WEX"/>
<dbReference type="PDBsum" id="2E5I"/>
<dbReference type="BMRB" id="Q921F4"/>
<dbReference type="SMR" id="Q921F4"/>
<dbReference type="BioGRID" id="215518">
    <property type="interactions" value="12"/>
</dbReference>
<dbReference type="FunCoup" id="Q921F4">
    <property type="interactions" value="4453"/>
</dbReference>
<dbReference type="IntAct" id="Q921F4">
    <property type="interactions" value="2"/>
</dbReference>
<dbReference type="MINT" id="Q921F4"/>
<dbReference type="STRING" id="10090.ENSMUSP00000139372"/>
<dbReference type="GlyGen" id="Q921F4">
    <property type="glycosylation" value="2 sites, 1 N-linked glycan (1 site), 1 O-linked glycan (1 site)"/>
</dbReference>
<dbReference type="iPTMnet" id="Q921F4"/>
<dbReference type="PhosphoSitePlus" id="Q921F4"/>
<dbReference type="SwissPalm" id="Q921F4"/>
<dbReference type="jPOST" id="Q921F4"/>
<dbReference type="PaxDb" id="10090-ENSMUSP00000058308"/>
<dbReference type="PeptideAtlas" id="Q921F4"/>
<dbReference type="ProteomicsDB" id="269611">
    <molecule id="Q921F4-1"/>
</dbReference>
<dbReference type="ProteomicsDB" id="269612">
    <molecule id="Q921F4-4"/>
</dbReference>
<dbReference type="ProteomicsDB" id="269613">
    <molecule id="Q921F4-5"/>
</dbReference>
<dbReference type="Pumba" id="Q921F4"/>
<dbReference type="Antibodypedia" id="14627">
    <property type="antibodies" value="197 antibodies from 25 providers"/>
</dbReference>
<dbReference type="DNASU" id="72692"/>
<dbReference type="Ensembl" id="ENSMUST00000184635.8">
    <molecule id="Q921F4-1"/>
    <property type="protein sequence ID" value="ENSMUSP00000139372.2"/>
    <property type="gene ID" value="ENSMUSG00000024095.17"/>
</dbReference>
<dbReference type="GeneID" id="72692"/>
<dbReference type="KEGG" id="mmu:72692"/>
<dbReference type="UCSC" id="uc008dqk.2">
    <molecule id="Q921F4-1"/>
    <property type="organism name" value="mouse"/>
</dbReference>
<dbReference type="AGR" id="MGI:1919942"/>
<dbReference type="CTD" id="92906"/>
<dbReference type="MGI" id="MGI:1919942">
    <property type="gene designation" value="Hnrnpll"/>
</dbReference>
<dbReference type="VEuPathDB" id="HostDB:ENSMUSG00000024095"/>
<dbReference type="eggNOG" id="KOG1456">
    <property type="taxonomic scope" value="Eukaryota"/>
</dbReference>
<dbReference type="GeneTree" id="ENSGT01030000234642"/>
<dbReference type="HOGENOM" id="CLU_015171_0_0_1"/>
<dbReference type="InParanoid" id="Q921F4"/>
<dbReference type="OMA" id="GKRLNVX"/>
<dbReference type="OrthoDB" id="302770at2759"/>
<dbReference type="PhylomeDB" id="Q921F4"/>
<dbReference type="TreeFam" id="TF354318"/>
<dbReference type="BioGRID-ORCS" id="72692">
    <property type="hits" value="4 hits in 76 CRISPR screens"/>
</dbReference>
<dbReference type="ChiTaRS" id="Hnrnpll">
    <property type="organism name" value="mouse"/>
</dbReference>
<dbReference type="EvolutionaryTrace" id="Q921F4"/>
<dbReference type="PRO" id="PR:Q921F4"/>
<dbReference type="Proteomes" id="UP000000589">
    <property type="component" value="Chromosome 17"/>
</dbReference>
<dbReference type="RNAct" id="Q921F4">
    <property type="molecule type" value="protein"/>
</dbReference>
<dbReference type="Bgee" id="ENSMUSG00000024095">
    <property type="expression patterns" value="Expressed in medial ganglionic eminence and 264 other cell types or tissues"/>
</dbReference>
<dbReference type="ExpressionAtlas" id="Q921F4">
    <property type="expression patterns" value="baseline and differential"/>
</dbReference>
<dbReference type="GO" id="GO:0005634">
    <property type="term" value="C:nucleus"/>
    <property type="evidence" value="ECO:0007669"/>
    <property type="project" value="InterPro"/>
</dbReference>
<dbReference type="GO" id="GO:1990904">
    <property type="term" value="C:ribonucleoprotein complex"/>
    <property type="evidence" value="ECO:0007669"/>
    <property type="project" value="UniProtKB-KW"/>
</dbReference>
<dbReference type="GO" id="GO:0045202">
    <property type="term" value="C:synapse"/>
    <property type="evidence" value="ECO:0000314"/>
    <property type="project" value="SynGO"/>
</dbReference>
<dbReference type="GO" id="GO:0003729">
    <property type="term" value="F:mRNA binding"/>
    <property type="evidence" value="ECO:0000250"/>
    <property type="project" value="UniProtKB"/>
</dbReference>
<dbReference type="GO" id="GO:0006397">
    <property type="term" value="P:mRNA processing"/>
    <property type="evidence" value="ECO:0007669"/>
    <property type="project" value="InterPro"/>
</dbReference>
<dbReference type="GO" id="GO:0033120">
    <property type="term" value="P:positive regulation of RNA splicing"/>
    <property type="evidence" value="ECO:0000250"/>
    <property type="project" value="UniProtKB"/>
</dbReference>
<dbReference type="CDD" id="cd12781">
    <property type="entry name" value="RRM1_hnRPLL"/>
    <property type="match status" value="1"/>
</dbReference>
<dbReference type="CDD" id="cd12786">
    <property type="entry name" value="RRM2_hnRPLL"/>
    <property type="match status" value="1"/>
</dbReference>
<dbReference type="CDD" id="cd12700">
    <property type="entry name" value="RRM3_hnRPLL"/>
    <property type="match status" value="1"/>
</dbReference>
<dbReference type="CDD" id="cd12705">
    <property type="entry name" value="RRM4_hnRPLL"/>
    <property type="match status" value="1"/>
</dbReference>
<dbReference type="FunFam" id="3.30.70.330:FF:000072">
    <property type="entry name" value="heterogeneous nuclear ribonucleoprotein L isoform X1"/>
    <property type="match status" value="1"/>
</dbReference>
<dbReference type="FunFam" id="3.30.70.330:FF:000052">
    <property type="entry name" value="Heterogeneous nuclear ribonucleoprotein L like"/>
    <property type="match status" value="1"/>
</dbReference>
<dbReference type="FunFam" id="3.30.70.330:FF:000073">
    <property type="entry name" value="Heterogeneous nuclear ribonucleoprotein L like"/>
    <property type="match status" value="1"/>
</dbReference>
<dbReference type="FunFam" id="3.30.70.330:FF:000104">
    <property type="entry name" value="Heterogeneous nuclear ribonucleoprotein L like"/>
    <property type="match status" value="1"/>
</dbReference>
<dbReference type="Gene3D" id="3.30.70.330">
    <property type="match status" value="4"/>
</dbReference>
<dbReference type="InterPro" id="IPR006536">
    <property type="entry name" value="HnRNP-L/PTB"/>
</dbReference>
<dbReference type="InterPro" id="IPR034985">
    <property type="entry name" value="hnRPLL_RRM1"/>
</dbReference>
<dbReference type="InterPro" id="IPR034986">
    <property type="entry name" value="hnRPLL_RRM2"/>
</dbReference>
<dbReference type="InterPro" id="IPR034983">
    <property type="entry name" value="hnRPLL_RRM3"/>
</dbReference>
<dbReference type="InterPro" id="IPR034987">
    <property type="entry name" value="hnRPLL_RRM4"/>
</dbReference>
<dbReference type="InterPro" id="IPR012677">
    <property type="entry name" value="Nucleotide-bd_a/b_plait_sf"/>
</dbReference>
<dbReference type="InterPro" id="IPR021790">
    <property type="entry name" value="PTBP1-like_RRM2"/>
</dbReference>
<dbReference type="InterPro" id="IPR035979">
    <property type="entry name" value="RBD_domain_sf"/>
</dbReference>
<dbReference type="InterPro" id="IPR000504">
    <property type="entry name" value="RRM_dom"/>
</dbReference>
<dbReference type="NCBIfam" id="TIGR01649">
    <property type="entry name" value="hnRNP-L_PTB"/>
    <property type="match status" value="1"/>
</dbReference>
<dbReference type="PANTHER" id="PTHR15592">
    <property type="entry name" value="MATRIN 3/NUCLEAR PROTEIN 220-RELATED"/>
    <property type="match status" value="1"/>
</dbReference>
<dbReference type="Pfam" id="PF00076">
    <property type="entry name" value="RRM_1"/>
    <property type="match status" value="1"/>
</dbReference>
<dbReference type="Pfam" id="PF13893">
    <property type="entry name" value="RRM_5"/>
    <property type="match status" value="1"/>
</dbReference>
<dbReference type="Pfam" id="PF11835">
    <property type="entry name" value="RRM_8"/>
    <property type="match status" value="1"/>
</dbReference>
<dbReference type="SMART" id="SM00360">
    <property type="entry name" value="RRM"/>
    <property type="match status" value="3"/>
</dbReference>
<dbReference type="SUPFAM" id="SSF54928">
    <property type="entry name" value="RNA-binding domain, RBD"/>
    <property type="match status" value="3"/>
</dbReference>
<dbReference type="PROSITE" id="PS50102">
    <property type="entry name" value="RRM"/>
    <property type="match status" value="2"/>
</dbReference>
<gene>
    <name type="primary">Hnrnpll</name>
    <name type="synonym">Hnrpll</name>
</gene>
<accession>Q921F4</accession>
<accession>Q3UIK6</accession>
<accession>Q6IR44</accession>
<accession>Q8BIP6</accession>
<accession>Q91W02</accession>
<accession>Q99J40</accession>
<protein>
    <recommendedName>
        <fullName>Heterogeneous nuclear ribonucleoprotein L-like</fullName>
    </recommendedName>
</protein>
<comment type="function">
    <text evidence="5">RNA-binding protein that functions as a regulator of alternative splicing for multiple target mRNAs, including PTPRC/CD45 and STAT5A. Required for alternative splicing of PTPRC.</text>
</comment>
<comment type="subunit">
    <text evidence="1">Interacts with HNRNPL.</text>
</comment>
<comment type="alternative products">
    <event type="alternative splicing"/>
    <isoform>
        <id>Q921F4-1</id>
        <name>1</name>
        <sequence type="displayed"/>
    </isoform>
    <isoform>
        <id>Q921F4-4</id>
        <name>2</name>
        <sequence type="described" ref="VSP_013290 VSP_013291"/>
    </isoform>
    <isoform>
        <id>Q921F4-5</id>
        <name>3</name>
        <sequence type="described" ref="VSP_026132 VSP_026133"/>
    </isoform>
</comment>
<comment type="induction">
    <text evidence="5">Up-regulated in stimulated T-cells.</text>
</comment>
<comment type="sequence caution" evidence="8">
    <conflict type="erroneous initiation">
        <sequence resource="EMBL-CDS" id="BAE27500"/>
    </conflict>
</comment>